<sequence length="555" mass="59900">MSTETELQVAVKTSAKKDSRKKGQDRSEATLIKRFKGEGVRYKAKLIGIDEVSAARGDKLCQDSMMKLKGVVAGARSKGEHKQKIFLTISFGGIKIFDEKTGALQHHHAVHEISYIAKDITDHRAFGYVCGKEGNHRFVAIKTAQAAEPVILDLRDLFQLIYELKQREELEKKAQKDKQCEQAVYQTILEEDVEDPVYQYIVFEAGHEPIRDPETEENIYQVPTSQKKEGVYDVPKSQPVSAVTQLELFGDMSTPPDITSPPTPATPGDAFLPAPSQTLPGSADVFGSMSFGTAAVPSGYVAMGAVLPSFWGQQPLVQQQIAMGAQPPVAQVIPGAQPIAWGQPGLFPATQQPWPTVAGQFPPAAFMPTQTVMPLPAAMFQGPLTPLATVPGTNDSARSSPQSDKPRQKMGKEMFKDFQMAQPPPVPSRKPDQPSLTCTSEAFSSYFNKVGVAQDTDDCDDFDISQLNLTPVTSTTPSTNSPPTPAPRQSSPSKSSASHVSDPTADDIFEEGFESPSKSEEQEAPDGSQASSTSDPFGEPSGEPSGDNISPQDGS</sequence>
<accession>Q8CJH2</accession>
<organism>
    <name type="scientific">Rattus norvegicus</name>
    <name type="common">Rat</name>
    <dbReference type="NCBI Taxonomy" id="10116"/>
    <lineage>
        <taxon>Eukaryota</taxon>
        <taxon>Metazoa</taxon>
        <taxon>Chordata</taxon>
        <taxon>Craniata</taxon>
        <taxon>Vertebrata</taxon>
        <taxon>Euteleostomi</taxon>
        <taxon>Mammalia</taxon>
        <taxon>Eutheria</taxon>
        <taxon>Euarchontoglires</taxon>
        <taxon>Glires</taxon>
        <taxon>Rodentia</taxon>
        <taxon>Myomorpha</taxon>
        <taxon>Muroidea</taxon>
        <taxon>Muridae</taxon>
        <taxon>Murinae</taxon>
        <taxon>Rattus</taxon>
    </lineage>
</organism>
<name>DAB1_RAT</name>
<evidence type="ECO:0000250" key="1">
    <source>
        <dbReference type="UniProtKB" id="O75553"/>
    </source>
</evidence>
<evidence type="ECO:0000250" key="2">
    <source>
        <dbReference type="UniProtKB" id="P97318"/>
    </source>
</evidence>
<evidence type="ECO:0000255" key="3">
    <source>
        <dbReference type="PROSITE-ProRule" id="PRU00148"/>
    </source>
</evidence>
<evidence type="ECO:0000256" key="4">
    <source>
        <dbReference type="SAM" id="MobiDB-lite"/>
    </source>
</evidence>
<evidence type="ECO:0000269" key="5">
    <source>
    </source>
</evidence>
<gene>
    <name type="primary">Dab1</name>
</gene>
<protein>
    <recommendedName>
        <fullName>Disabled homolog 1</fullName>
    </recommendedName>
</protein>
<proteinExistence type="evidence at protein level"/>
<reference key="1">
    <citation type="submission" date="2001-10" db="EMBL/GenBank/DDBJ databases">
        <title>Dab1 gene in the rat brain.</title>
        <authorList>
            <person name="Kikkawa S."/>
            <person name="Misaki K."/>
            <person name="Terashima T."/>
        </authorList>
    </citation>
    <scope>NUCLEOTIDE SEQUENCE [MRNA]</scope>
    <source>
        <tissue>Cerebellum</tissue>
    </source>
</reference>
<reference key="2">
    <citation type="journal article" date="2002" name="J. Biol. Chem.">
        <title>The mechanism of growth-inhibitory effect of DOC-2/DAB2 in prostate cancer. Characterization of a novel GTPase-activating protein associated with N-terminal domain of DOC-2/DAB2.</title>
        <authorList>
            <person name="Wang Z."/>
            <person name="Tseng C.-P."/>
            <person name="Pong R.-C."/>
            <person name="Chen H."/>
            <person name="McConnell J.D."/>
            <person name="Navone N."/>
            <person name="Hsieh J.-T."/>
        </authorList>
    </citation>
    <scope>INTERACTION WITH DAB2IP</scope>
    <source>
        <tissue>Brain</tissue>
    </source>
</reference>
<reference key="3">
    <citation type="journal article" date="2006" name="Proc. Natl. Acad. Sci. U.S.A.">
        <title>Quantitative phosphoproteomics of vasopressin-sensitive renal cells: regulation of aquaporin-2 phosphorylation at two sites.</title>
        <authorList>
            <person name="Hoffert J.D."/>
            <person name="Pisitkun T."/>
            <person name="Wang G."/>
            <person name="Shen R.-F."/>
            <person name="Knepper M.A."/>
        </authorList>
    </citation>
    <scope>IDENTIFICATION BY MASS SPECTROMETRY [LARGE SCALE ANALYSIS]</scope>
</reference>
<feature type="chain" id="PRO_0000253324" description="Disabled homolog 1">
    <location>
        <begin position="1"/>
        <end position="555"/>
    </location>
</feature>
<feature type="domain" description="PID" evidence="3">
    <location>
        <begin position="36"/>
        <end position="189"/>
    </location>
</feature>
<feature type="region of interest" description="Disordered" evidence="4">
    <location>
        <begin position="1"/>
        <end position="26"/>
    </location>
</feature>
<feature type="region of interest" description="Disordered" evidence="4">
    <location>
        <begin position="386"/>
        <end position="409"/>
    </location>
</feature>
<feature type="region of interest" description="Disordered" evidence="4">
    <location>
        <begin position="469"/>
        <end position="555"/>
    </location>
</feature>
<feature type="compositionally biased region" description="Basic and acidic residues" evidence="4">
    <location>
        <begin position="15"/>
        <end position="26"/>
    </location>
</feature>
<feature type="compositionally biased region" description="Polar residues" evidence="4">
    <location>
        <begin position="391"/>
        <end position="403"/>
    </location>
</feature>
<feature type="compositionally biased region" description="Low complexity" evidence="4">
    <location>
        <begin position="470"/>
        <end position="479"/>
    </location>
</feature>
<feature type="compositionally biased region" description="Low complexity" evidence="4">
    <location>
        <begin position="490"/>
        <end position="501"/>
    </location>
</feature>
<feature type="compositionally biased region" description="Acidic residues" evidence="4">
    <location>
        <begin position="504"/>
        <end position="513"/>
    </location>
</feature>
<feature type="modified residue" description="Phosphotyrosine" evidence="2">
    <location>
        <position position="198"/>
    </location>
</feature>
<feature type="modified residue" description="Phosphotyrosine" evidence="2">
    <location>
        <position position="220"/>
    </location>
</feature>
<feature type="modified residue" description="Phosphotyrosine" evidence="2">
    <location>
        <position position="232"/>
    </location>
</feature>
<feature type="modified residue" description="Phosphoserine; by CDK5" evidence="2">
    <location>
        <position position="491"/>
    </location>
</feature>
<comment type="function">
    <text evidence="2">Signaling adapter of the reelin-mediated signaling pathway, which regulates the migration and differentiation of postmitotic neurons during brain development. Mediates intracellular transduction of Reelin signaling following reelin (RELN)-binding to its receptor: acts by docking proteins through its phosphotyrosine residues and PID domain.</text>
</comment>
<comment type="subunit">
    <text evidence="1 2 5">Associates with the SH2 domains of SRC, FYN and ABL (By similarity). Interacts (phosphorylated on tyrosine residues) with CRK and CRKL (via respective SH2 domain) (By similarity). Interacts with SIAH1, LRP8 and VLDLR (By similarity). Interacts with LRP1 (By similarity). Interacts with APLP1 (via NPXY motif) (By similarity). Interacts with DAB2IP (PubMed:11812785). Interacts with ZSWIM8 (By similarity).</text>
</comment>
<comment type="subcellular location">
    <subcellularLocation>
        <location evidence="2">Cytoplasm</location>
    </subcellularLocation>
</comment>
<comment type="domain">
    <text evidence="2">The PID domain specifically binds to the Asn-Pro-Xaa-Tyr(P) motif found in many tyrosine-phosphorylated proteins.</text>
</comment>
<comment type="PTM">
    <text evidence="2">Phosphorylated by FYN on Tyr-198 and Tyr-220 upon reelin induction in embryonic neurons. Also phosphorylated on Ser-491 independently of reelin signaling.</text>
</comment>
<comment type="PTM">
    <text evidence="1 2">Ubiquitinated by various cullin-5-RING E3 ubiquitin-protein ligase complexes (ECS complexes) following ligand-binding and phosphorylation, leading to its degradation. Ubiquitinated by the ECS(SOCS7) complex in the cortical plate of the developing cerebral cortex following ligand-binding and phosphorylation by FYN, leading to its degradation by the proteasome. Recognized by ZSWIM8 through a disorder targets misorder mechanism that eliminates misfolded DAB1 via ubiquitination and proteasomal degradation.</text>
</comment>
<keyword id="KW-0963">Cytoplasm</keyword>
<keyword id="KW-0217">Developmental protein</keyword>
<keyword id="KW-0221">Differentiation</keyword>
<keyword id="KW-0524">Neurogenesis</keyword>
<keyword id="KW-0597">Phosphoprotein</keyword>
<keyword id="KW-1185">Reference proteome</keyword>
<keyword id="KW-0832">Ubl conjugation</keyword>
<dbReference type="EMBL" id="AB072426">
    <property type="protein sequence ID" value="BAC20288.1"/>
    <property type="molecule type" value="mRNA"/>
</dbReference>
<dbReference type="RefSeq" id="NP_001398748.1">
    <property type="nucleotide sequence ID" value="NM_001411819.1"/>
</dbReference>
<dbReference type="RefSeq" id="NP_705885.1">
    <property type="nucleotide sequence ID" value="NM_153621.2"/>
</dbReference>
<dbReference type="RefSeq" id="XP_017448669.1">
    <property type="nucleotide sequence ID" value="XM_017593180.1"/>
</dbReference>
<dbReference type="RefSeq" id="XP_038965262.1">
    <property type="nucleotide sequence ID" value="XM_039109334.2"/>
</dbReference>
<dbReference type="SMR" id="Q8CJH2"/>
<dbReference type="BioGRID" id="251792">
    <property type="interactions" value="2"/>
</dbReference>
<dbReference type="FunCoup" id="Q8CJH2">
    <property type="interactions" value="1026"/>
</dbReference>
<dbReference type="STRING" id="10116.ENSRNOP00000009977"/>
<dbReference type="GlyGen" id="Q8CJH2">
    <property type="glycosylation" value="4 sites"/>
</dbReference>
<dbReference type="iPTMnet" id="Q8CJH2"/>
<dbReference type="PhosphoSitePlus" id="Q8CJH2"/>
<dbReference type="PaxDb" id="10116-ENSRNOP00000009977"/>
<dbReference type="Ensembl" id="ENSRNOT00000009977.3">
    <property type="protein sequence ID" value="ENSRNOP00000009977.1"/>
    <property type="gene ID" value="ENSRNOG00000007410.7"/>
</dbReference>
<dbReference type="GeneID" id="266729"/>
<dbReference type="KEGG" id="rno:266729"/>
<dbReference type="UCSC" id="RGD:628770">
    <property type="organism name" value="rat"/>
</dbReference>
<dbReference type="AGR" id="RGD:628770"/>
<dbReference type="CTD" id="1600"/>
<dbReference type="RGD" id="628770">
    <property type="gene designation" value="Dab1"/>
</dbReference>
<dbReference type="eggNOG" id="KOG3535">
    <property type="taxonomic scope" value="Eukaryota"/>
</dbReference>
<dbReference type="GeneTree" id="ENSGT00940000158038"/>
<dbReference type="HOGENOM" id="CLU_020747_2_0_1"/>
<dbReference type="InParanoid" id="Q8CJH2"/>
<dbReference type="OrthoDB" id="10069833at2759"/>
<dbReference type="PhylomeDB" id="Q8CJH2"/>
<dbReference type="Reactome" id="R-RNO-8866376">
    <property type="pathway name" value="Reelin signalling pathway"/>
</dbReference>
<dbReference type="PRO" id="PR:Q8CJH2"/>
<dbReference type="Proteomes" id="UP000002494">
    <property type="component" value="Chromosome 5"/>
</dbReference>
<dbReference type="Bgee" id="ENSRNOG00000007410">
    <property type="expression patterns" value="Expressed in frontal cortex and 11 other cell types or tissues"/>
</dbReference>
<dbReference type="ExpressionAtlas" id="Q8CJH2">
    <property type="expression patterns" value="baseline and differential"/>
</dbReference>
<dbReference type="GO" id="GO:0045177">
    <property type="term" value="C:apical part of cell"/>
    <property type="evidence" value="ECO:0000314"/>
    <property type="project" value="RGD"/>
</dbReference>
<dbReference type="GO" id="GO:0005903">
    <property type="term" value="C:brush border"/>
    <property type="evidence" value="ECO:0000314"/>
    <property type="project" value="RGD"/>
</dbReference>
<dbReference type="GO" id="GO:0005737">
    <property type="term" value="C:cytoplasm"/>
    <property type="evidence" value="ECO:0000250"/>
    <property type="project" value="UniProtKB"/>
</dbReference>
<dbReference type="GO" id="GO:0098978">
    <property type="term" value="C:glutamatergic synapse"/>
    <property type="evidence" value="ECO:0000266"/>
    <property type="project" value="RGD"/>
</dbReference>
<dbReference type="GO" id="GO:0043231">
    <property type="term" value="C:intracellular membrane-bounded organelle"/>
    <property type="evidence" value="ECO:0000318"/>
    <property type="project" value="GO_Central"/>
</dbReference>
<dbReference type="GO" id="GO:0043025">
    <property type="term" value="C:neuronal cell body"/>
    <property type="evidence" value="ECO:0000314"/>
    <property type="project" value="RGD"/>
</dbReference>
<dbReference type="GO" id="GO:0048471">
    <property type="term" value="C:perinuclear region of cytoplasm"/>
    <property type="evidence" value="ECO:0000266"/>
    <property type="project" value="RGD"/>
</dbReference>
<dbReference type="GO" id="GO:0045202">
    <property type="term" value="C:synapse"/>
    <property type="evidence" value="ECO:0000266"/>
    <property type="project" value="RGD"/>
</dbReference>
<dbReference type="GO" id="GO:0043548">
    <property type="term" value="F:phosphatidylinositol 3-kinase binding"/>
    <property type="evidence" value="ECO:0000353"/>
    <property type="project" value="RGD"/>
</dbReference>
<dbReference type="GO" id="GO:0035591">
    <property type="term" value="F:signaling adaptor activity"/>
    <property type="evidence" value="ECO:0000250"/>
    <property type="project" value="UniProtKB"/>
</dbReference>
<dbReference type="GO" id="GO:0007628">
    <property type="term" value="P:adult walking behavior"/>
    <property type="evidence" value="ECO:0000266"/>
    <property type="project" value="RGD"/>
</dbReference>
<dbReference type="GO" id="GO:0048708">
    <property type="term" value="P:astrocyte differentiation"/>
    <property type="evidence" value="ECO:0000266"/>
    <property type="project" value="RGD"/>
</dbReference>
<dbReference type="GO" id="GO:0007409">
    <property type="term" value="P:axonogenesis"/>
    <property type="evidence" value="ECO:0000266"/>
    <property type="project" value="RGD"/>
</dbReference>
<dbReference type="GO" id="GO:0007155">
    <property type="term" value="P:cell adhesion"/>
    <property type="evidence" value="ECO:0000266"/>
    <property type="project" value="RGD"/>
</dbReference>
<dbReference type="GO" id="GO:0007259">
    <property type="term" value="P:cell surface receptor signaling pathway via JAK-STAT"/>
    <property type="evidence" value="ECO:0000266"/>
    <property type="project" value="RGD"/>
</dbReference>
<dbReference type="GO" id="GO:0021813">
    <property type="term" value="P:cell-cell adhesion involved in neuronal-glial interactions involved in cerebral cortex radial glia guided migration"/>
    <property type="evidence" value="ECO:0000266"/>
    <property type="project" value="RGD"/>
</dbReference>
<dbReference type="GO" id="GO:0021589">
    <property type="term" value="P:cerebellum structural organization"/>
    <property type="evidence" value="ECO:0000266"/>
    <property type="project" value="RGD"/>
</dbReference>
<dbReference type="GO" id="GO:0021795">
    <property type="term" value="P:cerebral cortex cell migration"/>
    <property type="evidence" value="ECO:0000266"/>
    <property type="project" value="RGD"/>
</dbReference>
<dbReference type="GO" id="GO:0021987">
    <property type="term" value="P:cerebral cortex development"/>
    <property type="evidence" value="ECO:0000270"/>
    <property type="project" value="RGD"/>
</dbReference>
<dbReference type="GO" id="GO:0021799">
    <property type="term" value="P:cerebral cortex radially oriented cell migration"/>
    <property type="evidence" value="ECO:0000315"/>
    <property type="project" value="RGD"/>
</dbReference>
<dbReference type="GO" id="GO:0016358">
    <property type="term" value="P:dendrite development"/>
    <property type="evidence" value="ECO:0000266"/>
    <property type="project" value="RGD"/>
</dbReference>
<dbReference type="GO" id="GO:0051645">
    <property type="term" value="P:Golgi localization"/>
    <property type="evidence" value="ECO:0000266"/>
    <property type="project" value="RGD"/>
</dbReference>
<dbReference type="GO" id="GO:0021766">
    <property type="term" value="P:hippocampus development"/>
    <property type="evidence" value="ECO:0000266"/>
    <property type="project" value="RGD"/>
</dbReference>
<dbReference type="GO" id="GO:0097477">
    <property type="term" value="P:lateral motor column neuron migration"/>
    <property type="evidence" value="ECO:0000266"/>
    <property type="project" value="RGD"/>
</dbReference>
<dbReference type="GO" id="GO:0007494">
    <property type="term" value="P:midgut development"/>
    <property type="evidence" value="ECO:0000270"/>
    <property type="project" value="RGD"/>
</dbReference>
<dbReference type="GO" id="GO:0097475">
    <property type="term" value="P:motor neuron migration"/>
    <property type="evidence" value="ECO:0000266"/>
    <property type="project" value="RGD"/>
</dbReference>
<dbReference type="GO" id="GO:0048712">
    <property type="term" value="P:negative regulation of astrocyte differentiation"/>
    <property type="evidence" value="ECO:0000266"/>
    <property type="project" value="RGD"/>
</dbReference>
<dbReference type="GO" id="GO:0050771">
    <property type="term" value="P:negative regulation of axonogenesis"/>
    <property type="evidence" value="ECO:0000266"/>
    <property type="project" value="RGD"/>
</dbReference>
<dbReference type="GO" id="GO:0007162">
    <property type="term" value="P:negative regulation of cell adhesion"/>
    <property type="evidence" value="ECO:0000266"/>
    <property type="project" value="RGD"/>
</dbReference>
<dbReference type="GO" id="GO:0046426">
    <property type="term" value="P:negative regulation of receptor signaling pathway via JAK-STAT"/>
    <property type="evidence" value="ECO:0000266"/>
    <property type="project" value="RGD"/>
</dbReference>
<dbReference type="GO" id="GO:0030182">
    <property type="term" value="P:neuron differentiation"/>
    <property type="evidence" value="ECO:0000266"/>
    <property type="project" value="RGD"/>
</dbReference>
<dbReference type="GO" id="GO:0001764">
    <property type="term" value="P:neuron migration"/>
    <property type="evidence" value="ECO:0000314"/>
    <property type="project" value="RGD"/>
</dbReference>
<dbReference type="GO" id="GO:0045666">
    <property type="term" value="P:positive regulation of neuron differentiation"/>
    <property type="evidence" value="ECO:0000266"/>
    <property type="project" value="RGD"/>
</dbReference>
<dbReference type="GO" id="GO:0021942">
    <property type="term" value="P:radial glia guided migration of Purkinje cell"/>
    <property type="evidence" value="ECO:0000266"/>
    <property type="project" value="RGD"/>
</dbReference>
<dbReference type="GO" id="GO:0140650">
    <property type="term" value="P:radial glia-guided pyramidal neuron migration"/>
    <property type="evidence" value="ECO:0000266"/>
    <property type="project" value="RGD"/>
</dbReference>
<dbReference type="GO" id="GO:0038026">
    <property type="term" value="P:reelin-mediated signaling pathway"/>
    <property type="evidence" value="ECO:0000266"/>
    <property type="project" value="RGD"/>
</dbReference>
<dbReference type="GO" id="GO:0090128">
    <property type="term" value="P:regulation of synapse maturation"/>
    <property type="evidence" value="ECO:0000266"/>
    <property type="project" value="RGD"/>
</dbReference>
<dbReference type="GO" id="GO:0009410">
    <property type="term" value="P:response to xenobiotic stimulus"/>
    <property type="evidence" value="ECO:0000270"/>
    <property type="project" value="RGD"/>
</dbReference>
<dbReference type="GO" id="GO:0007264">
    <property type="term" value="P:small GTPase-mediated signal transduction"/>
    <property type="evidence" value="ECO:0000266"/>
    <property type="project" value="RGD"/>
</dbReference>
<dbReference type="GO" id="GO:0021517">
    <property type="term" value="P:ventral spinal cord development"/>
    <property type="evidence" value="ECO:0000266"/>
    <property type="project" value="RGD"/>
</dbReference>
<dbReference type="CDD" id="cd01215">
    <property type="entry name" value="PTB_Dab"/>
    <property type="match status" value="1"/>
</dbReference>
<dbReference type="FunFam" id="2.30.29.30:FF:000035">
    <property type="entry name" value="Disabled homolog 2 isoform 1"/>
    <property type="match status" value="1"/>
</dbReference>
<dbReference type="Gene3D" id="2.30.29.30">
    <property type="entry name" value="Pleckstrin-homology domain (PH domain)/Phosphotyrosine-binding domain (PTB)"/>
    <property type="match status" value="1"/>
</dbReference>
<dbReference type="InterPro" id="IPR048559">
    <property type="entry name" value="DAB1/2_SBM"/>
</dbReference>
<dbReference type="InterPro" id="IPR048561">
    <property type="entry name" value="Dab_PTB"/>
</dbReference>
<dbReference type="InterPro" id="IPR011993">
    <property type="entry name" value="PH-like_dom_sf"/>
</dbReference>
<dbReference type="InterPro" id="IPR006020">
    <property type="entry name" value="PTB/PI_dom"/>
</dbReference>
<dbReference type="PANTHER" id="PTHR47695:SF4">
    <property type="entry name" value="DISABLED HOMOLOG 1"/>
    <property type="match status" value="1"/>
</dbReference>
<dbReference type="PANTHER" id="PTHR47695">
    <property type="entry name" value="PID DOMAIN-CONTAINING PROTEIN"/>
    <property type="match status" value="1"/>
</dbReference>
<dbReference type="Pfam" id="PF21792">
    <property type="entry name" value="DAB2_SBM"/>
    <property type="match status" value="1"/>
</dbReference>
<dbReference type="Pfam" id="PF00640">
    <property type="entry name" value="PID"/>
    <property type="match status" value="1"/>
</dbReference>
<dbReference type="SMART" id="SM00462">
    <property type="entry name" value="PTB"/>
    <property type="match status" value="1"/>
</dbReference>
<dbReference type="SUPFAM" id="SSF50729">
    <property type="entry name" value="PH domain-like"/>
    <property type="match status" value="1"/>
</dbReference>
<dbReference type="PROSITE" id="PS01179">
    <property type="entry name" value="PID"/>
    <property type="match status" value="1"/>
</dbReference>